<protein>
    <recommendedName>
        <fullName evidence="1">Cadaverine/lysine antiporter</fullName>
    </recommendedName>
</protein>
<proteinExistence type="inferred from homology"/>
<name>CADB_ECOL6</name>
<reference key="1">
    <citation type="journal article" date="2002" name="Proc. Natl. Acad. Sci. U.S.A.">
        <title>Extensive mosaic structure revealed by the complete genome sequence of uropathogenic Escherichia coli.</title>
        <authorList>
            <person name="Welch R.A."/>
            <person name="Burland V."/>
            <person name="Plunkett G. III"/>
            <person name="Redford P."/>
            <person name="Roesch P."/>
            <person name="Rasko D."/>
            <person name="Buckles E.L."/>
            <person name="Liou S.-R."/>
            <person name="Boutin A."/>
            <person name="Hackett J."/>
            <person name="Stroud D."/>
            <person name="Mayhew G.F."/>
            <person name="Rose D.J."/>
            <person name="Zhou S."/>
            <person name="Schwartz D.C."/>
            <person name="Perna N.T."/>
            <person name="Mobley H.L.T."/>
            <person name="Donnenberg M.S."/>
            <person name="Blattner F.R."/>
        </authorList>
    </citation>
    <scope>NUCLEOTIDE SEQUENCE [LARGE SCALE GENOMIC DNA]</scope>
    <source>
        <strain>CFT073 / ATCC 700928 / UPEC</strain>
    </source>
</reference>
<feature type="chain" id="PRO_0000054246" description="Cadaverine/lysine antiporter">
    <location>
        <begin position="1"/>
        <end position="444"/>
    </location>
</feature>
<feature type="transmembrane region" description="Helical" evidence="2">
    <location>
        <begin position="7"/>
        <end position="27"/>
    </location>
</feature>
<feature type="transmembrane region" description="Helical" evidence="2">
    <location>
        <begin position="35"/>
        <end position="55"/>
    </location>
</feature>
<feature type="transmembrane region" description="Helical" evidence="2">
    <location>
        <begin position="95"/>
        <end position="115"/>
    </location>
</feature>
<feature type="transmembrane region" description="Helical" evidence="2">
    <location>
        <begin position="123"/>
        <end position="143"/>
    </location>
</feature>
<feature type="transmembrane region" description="Helical" evidence="2">
    <location>
        <begin position="149"/>
        <end position="169"/>
    </location>
</feature>
<feature type="transmembrane region" description="Helical" evidence="2">
    <location>
        <begin position="193"/>
        <end position="213"/>
    </location>
</feature>
<feature type="transmembrane region" description="Helical" evidence="2">
    <location>
        <begin position="222"/>
        <end position="242"/>
    </location>
</feature>
<feature type="transmembrane region" description="Helical" evidence="2">
    <location>
        <begin position="273"/>
        <end position="293"/>
    </location>
</feature>
<feature type="transmembrane region" description="Helical" evidence="2">
    <location>
        <begin position="323"/>
        <end position="343"/>
    </location>
</feature>
<feature type="transmembrane region" description="Helical" evidence="2">
    <location>
        <begin position="354"/>
        <end position="374"/>
    </location>
</feature>
<feature type="transmembrane region" description="Helical" evidence="2">
    <location>
        <begin position="384"/>
        <end position="404"/>
    </location>
</feature>
<feature type="transmembrane region" description="Helical" evidence="2">
    <location>
        <begin position="405"/>
        <end position="425"/>
    </location>
</feature>
<evidence type="ECO:0000250" key="1">
    <source>
        <dbReference type="UniProtKB" id="P0AAE8"/>
    </source>
</evidence>
<evidence type="ECO:0000255" key="2"/>
<evidence type="ECO:0000305" key="3"/>
<gene>
    <name type="primary">cadB</name>
    <name type="ordered locus">c5141</name>
</gene>
<accession>P0AAE9</accession>
<accession>P23891</accession>
<dbReference type="EMBL" id="AE014075">
    <property type="protein sequence ID" value="AAN83563.1"/>
    <property type="molecule type" value="Genomic_DNA"/>
</dbReference>
<dbReference type="RefSeq" id="WP_000092909.1">
    <property type="nucleotide sequence ID" value="NZ_CP051263.1"/>
</dbReference>
<dbReference type="SMR" id="P0AAE9"/>
<dbReference type="STRING" id="199310.c5141"/>
<dbReference type="GeneID" id="75203985"/>
<dbReference type="KEGG" id="ecc:c5141"/>
<dbReference type="eggNOG" id="COG0531">
    <property type="taxonomic scope" value="Bacteria"/>
</dbReference>
<dbReference type="HOGENOM" id="CLU_007946_1_0_6"/>
<dbReference type="BioCyc" id="ECOL199310:C5141-MONOMER"/>
<dbReference type="Proteomes" id="UP000001410">
    <property type="component" value="Chromosome"/>
</dbReference>
<dbReference type="GO" id="GO:0005886">
    <property type="term" value="C:plasma membrane"/>
    <property type="evidence" value="ECO:0007669"/>
    <property type="project" value="UniProtKB-SubCell"/>
</dbReference>
<dbReference type="GO" id="GO:0015297">
    <property type="term" value="F:antiporter activity"/>
    <property type="evidence" value="ECO:0007669"/>
    <property type="project" value="UniProtKB-KW"/>
</dbReference>
<dbReference type="GO" id="GO:0006865">
    <property type="term" value="P:amino acid transport"/>
    <property type="evidence" value="ECO:0007669"/>
    <property type="project" value="UniProtKB-KW"/>
</dbReference>
<dbReference type="FunFam" id="1.20.1740.10:FF:000020">
    <property type="entry name" value="Putative cadaverine/lysine antiporter CadB"/>
    <property type="match status" value="1"/>
</dbReference>
<dbReference type="Gene3D" id="1.20.1740.10">
    <property type="entry name" value="Amino acid/polyamine transporter I"/>
    <property type="match status" value="1"/>
</dbReference>
<dbReference type="InterPro" id="IPR002293">
    <property type="entry name" value="AA/rel_permease1"/>
</dbReference>
<dbReference type="InterPro" id="IPR004754">
    <property type="entry name" value="Amino_acid_antiprt"/>
</dbReference>
<dbReference type="InterPro" id="IPR050367">
    <property type="entry name" value="APC_superfamily"/>
</dbReference>
<dbReference type="NCBIfam" id="TIGR00905">
    <property type="entry name" value="2A0302"/>
    <property type="match status" value="1"/>
</dbReference>
<dbReference type="NCBIfam" id="NF007754">
    <property type="entry name" value="PRK10435.1"/>
    <property type="match status" value="1"/>
</dbReference>
<dbReference type="PANTHER" id="PTHR42770">
    <property type="entry name" value="AMINO ACID TRANSPORTER-RELATED"/>
    <property type="match status" value="1"/>
</dbReference>
<dbReference type="PANTHER" id="PTHR42770:SF5">
    <property type="entry name" value="CADAVERINE_LYSINE ANTIPORTER"/>
    <property type="match status" value="1"/>
</dbReference>
<dbReference type="Pfam" id="PF13520">
    <property type="entry name" value="AA_permease_2"/>
    <property type="match status" value="1"/>
</dbReference>
<dbReference type="PIRSF" id="PIRSF006060">
    <property type="entry name" value="AA_transporter"/>
    <property type="match status" value="1"/>
</dbReference>
<comment type="function">
    <text evidence="1">Under acidic conditions, in the presence of lysine, functions as a cadaverine:lysine antiporter that facilitates the excretion of cadaverine and the uptake of lysine.</text>
</comment>
<comment type="catalytic activity">
    <reaction evidence="1">
        <text>cadaverine(in) + L-lysine(out) = cadaverine(out) + L-lysine(in)</text>
        <dbReference type="Rhea" id="RHEA:28895"/>
        <dbReference type="ChEBI" id="CHEBI:32551"/>
        <dbReference type="ChEBI" id="CHEBI:58384"/>
    </reaction>
    <physiologicalReaction direction="left-to-right" evidence="1">
        <dbReference type="Rhea" id="RHEA:28896"/>
    </physiologicalReaction>
</comment>
<comment type="subcellular location">
    <subcellularLocation>
        <location evidence="1">Cell inner membrane</location>
        <topology evidence="2">Multi-pass membrane protein</topology>
    </subcellularLocation>
</comment>
<comment type="similarity">
    <text evidence="3">Belongs to the amino acid-polyamine-organocation (APC) superfamily. Basic amino acid/polyamine antiporter (APA) (TC 2.A.3.2) family.</text>
</comment>
<keyword id="KW-0029">Amino-acid transport</keyword>
<keyword id="KW-0050">Antiport</keyword>
<keyword id="KW-0997">Cell inner membrane</keyword>
<keyword id="KW-1003">Cell membrane</keyword>
<keyword id="KW-0472">Membrane</keyword>
<keyword id="KW-1185">Reference proteome</keyword>
<keyword id="KW-0812">Transmembrane</keyword>
<keyword id="KW-1133">Transmembrane helix</keyword>
<keyword id="KW-0813">Transport</keyword>
<sequence length="444" mass="46665">MSSAKKIGLFACTGVVAGNMMGSGIALLPANLASIGGIAIWGWIISIIGAMSLAYVYARLATKNPQQGGPIAYAGEISPAFGFQTGVLYYHANWIGNLAIGITAVSYLSTFFPVLNDPVPAGIACIAIVWVFTFVNMLGGTWVSRLTTIGLVLVLIPVVMTAIVGWHWFDAATYAANWNTADTTDGHAIIKSILLCLWAFVGVESAAVSTGMVKNPKRTVPLATMLGTGLAGIVYIAATQVLSGMYPSSVMAASGAPFAISASTILGNWAAPLVSAFTAFACLTSLGSWMMLVGQAGVRAANDGNFPKVYGEVDSNGIPKKGLLLAAVKMTALMILITLMNSAGGKASDLFGELTGIAVLLTMLPYFYSCVDLIRFEGVNIRNFVSLICSVLGCVFCFIALMGASSFELAGTFIVSLIILMFYARKMHERQSHSMDNHTASNAH</sequence>
<organism>
    <name type="scientific">Escherichia coli O6:H1 (strain CFT073 / ATCC 700928 / UPEC)</name>
    <dbReference type="NCBI Taxonomy" id="199310"/>
    <lineage>
        <taxon>Bacteria</taxon>
        <taxon>Pseudomonadati</taxon>
        <taxon>Pseudomonadota</taxon>
        <taxon>Gammaproteobacteria</taxon>
        <taxon>Enterobacterales</taxon>
        <taxon>Enterobacteriaceae</taxon>
        <taxon>Escherichia</taxon>
    </lineage>
</organism>